<proteinExistence type="inferred from homology"/>
<sequence>MAERPLDVIHRSLDKDVLVLLKRGGEFRGKLIGYDIHLNVVLAGADYIQDGEVVKSYGKIVVRGDNVLAISPVDIE</sequence>
<protein>
    <recommendedName>
        <fullName evidence="1">Putative snRNP Sm-like protein</fullName>
    </recommendedName>
</protein>
<reference key="1">
    <citation type="journal article" date="2007" name="Genome Biol.">
        <title>Genome analysis and genome-wide proteomics of Thermococcus gammatolerans, the most radioresistant organism known amongst the Archaea.</title>
        <authorList>
            <person name="Zivanovic Y."/>
            <person name="Armengaud J."/>
            <person name="Lagorce A."/>
            <person name="Leplat C."/>
            <person name="Guerin P."/>
            <person name="Dutertre M."/>
            <person name="Anthouard V."/>
            <person name="Forterre P."/>
            <person name="Wincker P."/>
            <person name="Confalonieri F."/>
        </authorList>
    </citation>
    <scope>NUCLEOTIDE SEQUENCE [LARGE SCALE GENOMIC DNA]</scope>
    <source>
        <strain>DSM 15229 / JCM 11827 / EJ3</strain>
    </source>
</reference>
<feature type="chain" id="PRO_1000204621" description="Putative snRNP Sm-like protein">
    <location>
        <begin position="1"/>
        <end position="76"/>
    </location>
</feature>
<feature type="domain" description="Sm" evidence="2">
    <location>
        <begin position="4"/>
        <end position="76"/>
    </location>
</feature>
<keyword id="KW-1185">Reference proteome</keyword>
<keyword id="KW-0687">Ribonucleoprotein</keyword>
<accession>C5A1H1</accession>
<gene>
    <name type="ordered locus">TGAM_1738</name>
</gene>
<evidence type="ECO:0000255" key="1">
    <source>
        <dbReference type="HAMAP-Rule" id="MF_00257"/>
    </source>
</evidence>
<evidence type="ECO:0000255" key="2">
    <source>
        <dbReference type="PROSITE-ProRule" id="PRU01346"/>
    </source>
</evidence>
<comment type="similarity">
    <text evidence="1">Belongs to the snRNP Sm proteins family.</text>
</comment>
<name>RUXX_THEGJ</name>
<organism>
    <name type="scientific">Thermococcus gammatolerans (strain DSM 15229 / JCM 11827 / EJ3)</name>
    <dbReference type="NCBI Taxonomy" id="593117"/>
    <lineage>
        <taxon>Archaea</taxon>
        <taxon>Methanobacteriati</taxon>
        <taxon>Methanobacteriota</taxon>
        <taxon>Thermococci</taxon>
        <taxon>Thermococcales</taxon>
        <taxon>Thermococcaceae</taxon>
        <taxon>Thermococcus</taxon>
    </lineage>
</organism>
<dbReference type="EMBL" id="CP001398">
    <property type="protein sequence ID" value="ACS34240.1"/>
    <property type="molecule type" value="Genomic_DNA"/>
</dbReference>
<dbReference type="RefSeq" id="WP_014122271.1">
    <property type="nucleotide sequence ID" value="NC_012804.1"/>
</dbReference>
<dbReference type="SMR" id="C5A1H1"/>
<dbReference type="STRING" id="593117.TGAM_1738"/>
<dbReference type="PaxDb" id="593117-TGAM_1738"/>
<dbReference type="GeneID" id="27134355"/>
<dbReference type="GeneID" id="7987457"/>
<dbReference type="KEGG" id="tga:TGAM_1738"/>
<dbReference type="PATRIC" id="fig|593117.10.peg.1745"/>
<dbReference type="eggNOG" id="arCOG00998">
    <property type="taxonomic scope" value="Archaea"/>
</dbReference>
<dbReference type="HOGENOM" id="CLU_076902_11_1_2"/>
<dbReference type="OrthoDB" id="371816at2157"/>
<dbReference type="Proteomes" id="UP000001488">
    <property type="component" value="Chromosome"/>
</dbReference>
<dbReference type="GO" id="GO:1990904">
    <property type="term" value="C:ribonucleoprotein complex"/>
    <property type="evidence" value="ECO:0007669"/>
    <property type="project" value="UniProtKB-KW"/>
</dbReference>
<dbReference type="GO" id="GO:0003723">
    <property type="term" value="F:RNA binding"/>
    <property type="evidence" value="ECO:0007669"/>
    <property type="project" value="InterPro"/>
</dbReference>
<dbReference type="CDD" id="cd01731">
    <property type="entry name" value="archaeal_Sm1"/>
    <property type="match status" value="1"/>
</dbReference>
<dbReference type="Gene3D" id="2.30.30.100">
    <property type="match status" value="1"/>
</dbReference>
<dbReference type="HAMAP" id="MF_00257">
    <property type="entry name" value="Lsm_RuxX"/>
    <property type="match status" value="1"/>
</dbReference>
<dbReference type="InterPro" id="IPR010920">
    <property type="entry name" value="LSM_dom_sf"/>
</dbReference>
<dbReference type="InterPro" id="IPR047575">
    <property type="entry name" value="Sm"/>
</dbReference>
<dbReference type="InterPro" id="IPR001163">
    <property type="entry name" value="Sm_dom_euk/arc"/>
</dbReference>
<dbReference type="InterPro" id="IPR022901">
    <property type="entry name" value="snRNP_Sm-like_arc"/>
</dbReference>
<dbReference type="NCBIfam" id="NF001963">
    <property type="entry name" value="PRK00737.1"/>
    <property type="match status" value="1"/>
</dbReference>
<dbReference type="Pfam" id="PF01423">
    <property type="entry name" value="LSM"/>
    <property type="match status" value="1"/>
</dbReference>
<dbReference type="SMART" id="SM00651">
    <property type="entry name" value="Sm"/>
    <property type="match status" value="1"/>
</dbReference>
<dbReference type="SUPFAM" id="SSF50182">
    <property type="entry name" value="Sm-like ribonucleoproteins"/>
    <property type="match status" value="1"/>
</dbReference>
<dbReference type="PROSITE" id="PS52002">
    <property type="entry name" value="SM"/>
    <property type="match status" value="1"/>
</dbReference>